<reference key="1">
    <citation type="submission" date="2006-10" db="EMBL/GenBank/DDBJ databases">
        <title>NISC comparative sequencing initiative.</title>
        <authorList>
            <person name="Antonellis A."/>
            <person name="Ayele K."/>
            <person name="Benjamin B."/>
            <person name="Blakesley R.W."/>
            <person name="Boakye A."/>
            <person name="Bouffard G.G."/>
            <person name="Brinkley C."/>
            <person name="Brooks S."/>
            <person name="Chu G."/>
            <person name="Coleman H."/>
            <person name="Engle J."/>
            <person name="Gestole M."/>
            <person name="Greene A."/>
            <person name="Guan X."/>
            <person name="Gupta J."/>
            <person name="Haghighi P."/>
            <person name="Han J."/>
            <person name="Hansen N."/>
            <person name="Ho S.-L."/>
            <person name="Hu P."/>
            <person name="Hunter G."/>
            <person name="Hurle B."/>
            <person name="Idol J.R."/>
            <person name="Kwong P."/>
            <person name="Laric P."/>
            <person name="Larson S."/>
            <person name="Lee-Lin S.-Q."/>
            <person name="Legaspi R."/>
            <person name="Madden M."/>
            <person name="Maduro Q.L."/>
            <person name="Maduro V.B."/>
            <person name="Margulies E.H."/>
            <person name="Masiello C."/>
            <person name="Maskeri B."/>
            <person name="McDowell J."/>
            <person name="Mojidi H.A."/>
            <person name="Mullikin J.C."/>
            <person name="Oestreicher J.S."/>
            <person name="Park M."/>
            <person name="Portnoy M.E."/>
            <person name="Prasad A."/>
            <person name="Puri O."/>
            <person name="Reddix-Dugue N."/>
            <person name="Schandler K."/>
            <person name="Schueler M.G."/>
            <person name="Sison C."/>
            <person name="Stantripop S."/>
            <person name="Stephen E."/>
            <person name="Taye A."/>
            <person name="Thomas J.W."/>
            <person name="Thomas P.J."/>
            <person name="Tsipouri V."/>
            <person name="Ung L."/>
            <person name="Vogt J.L."/>
            <person name="Wetherby K.D."/>
            <person name="Young A."/>
            <person name="Green E.D."/>
        </authorList>
    </citation>
    <scope>NUCLEOTIDE SEQUENCE [LARGE SCALE GENOMIC DNA]</scope>
</reference>
<evidence type="ECO:0000250" key="1"/>
<evidence type="ECO:0000250" key="2">
    <source>
        <dbReference type="UniProtKB" id="P51636"/>
    </source>
</evidence>
<evidence type="ECO:0000250" key="3">
    <source>
        <dbReference type="UniProtKB" id="Q9WVC3"/>
    </source>
</evidence>
<evidence type="ECO:0000255" key="4"/>
<evidence type="ECO:0000305" key="5"/>
<sequence>MGLETEKADVQLFMDDDSYSHHSGVDYGDPEKFVDSGQDRDPHRLNSHLKVGFEDVIAEPMNMHSFDKVWICSHALFEISKYVIYKFLTVFLAIPLAFTAGILFATLSCLHIWIIMPFVKTCLMVLPSVQTIWRSVTDVIIAPLCTSIGRICSSVSLQVSHD</sequence>
<comment type="function">
    <text evidence="1">May act as a scaffolding protein within caveolar membranes. Interacts directly with G-protein alpha subunits and can functionally regulate their activity. Acts as an accessory protein in conjunction with CAV1 in targeting to lipid rafts and driving caveolae formation. The Ser-36 phosphorylated form has a role in modulating mitosis in endothelial cells. Positive regulator of cellular mitogenesis of the MAPK signaling pathway. Required for the insulin-stimulated nuclear translocation and activation of MAPK1 and STAT3, and the subsequent regulation of cell cycle progression (By similarity).</text>
</comment>
<comment type="subunit">
    <text evidence="1">Monomer or homodimer (By similarity). Interacts with CAV1; the interaction forms a stable heterooligomeric complex that is required for targeting to lipid rafts and for caveolae formation. Tyrosine phosphorylated forms do not form heterooligomers with the Tyr-19-phosphorylated form existing as a monomer or dimer, and the Tyr-27-form as a monomer only. Interacts (tyrosine phosphorylated form) with the SH2 domain-containing proteins, RASA1, NCK1 and SRC. Interacts (tyrosine phosphorylated form) with INSR, the interaction (Tyr-27-phosphorylated form) is increased on insulin stimulation. Interacts (Tyr-19 phosphorylated form) with MAPK1 (phosphorylated form); the interaction, promoted by insulin, leads to nuclear location and MAPK1 activation. Interacts with STAT3; the interaction is increased on insulin-induced tyrosine phosphorylation leading to STAT activation (By similarity).</text>
</comment>
<comment type="subcellular location">
    <subcellularLocation>
        <location evidence="1">Nucleus</location>
    </subcellularLocation>
    <subcellularLocation>
        <location evidence="1">Cytoplasm</location>
    </subcellularLocation>
    <subcellularLocation>
        <location>Golgi apparatus membrane</location>
        <topology>Peripheral membrane protein</topology>
    </subcellularLocation>
    <subcellularLocation>
        <location>Cell membrane</location>
        <topology>Peripheral membrane protein</topology>
    </subcellularLocation>
    <subcellularLocation>
        <location>Membrane</location>
        <location>Caveola</location>
        <topology>Peripheral membrane protein</topology>
    </subcellularLocation>
    <text evidence="1">Potential hairpin-like structure in the membrane. Membrane protein of caveolae. Tyr-19-phosphorylated form is enriched at sites of cell-cell contact and is translocated to the nucleus in complex with MAPK1 in response to insulin (By similarity). Tyr-27-phosphorylated form is located both in the cytoplasm and plasma membrane. CAV1-mediated Ser-23-phosphorylated form locates to the plasma membrane. Ser-36-phosphorylated form resides in intracellular compartments.</text>
</comment>
<comment type="PTM">
    <text evidence="1">Phosphorylated on serine and tyrosine residues. CAV1 promotes phosphorylation on Ser-23 which then targets the complex to the plasma membrane, lipid rafts and caveolae. Phosphorylation on Ser-36 appears to modulate mitosis in endothelial cells (By similarity). Phosphorylation on both Tyr-19 and Tyr-27 is required for insulin-induced 'Ser-727' phosphorylation of STAT3 and its activation. Phosphorylation on Tyr-19 is required for insulin-induced phosphorylation of MAPK1 and DNA binding of STAT3. Tyrosine phosphorylation is induced by both EGF and insulin (By. similarity).</text>
</comment>
<comment type="similarity">
    <text evidence="5">Belongs to the caveolin family.</text>
</comment>
<gene>
    <name type="primary">CAV2</name>
</gene>
<keyword id="KW-1003">Cell membrane</keyword>
<keyword id="KW-0963">Cytoplasm</keyword>
<keyword id="KW-0333">Golgi apparatus</keyword>
<keyword id="KW-0472">Membrane</keyword>
<keyword id="KW-0539">Nucleus</keyword>
<keyword id="KW-0597">Phosphoprotein</keyword>
<protein>
    <recommendedName>
        <fullName>Caveolin-2</fullName>
    </recommendedName>
</protein>
<organism>
    <name type="scientific">Atelerix albiventris</name>
    <name type="common">Middle-African hedgehog</name>
    <name type="synonym">Four-toed hedgehog</name>
    <dbReference type="NCBI Taxonomy" id="9368"/>
    <lineage>
        <taxon>Eukaryota</taxon>
        <taxon>Metazoa</taxon>
        <taxon>Chordata</taxon>
        <taxon>Craniata</taxon>
        <taxon>Vertebrata</taxon>
        <taxon>Euteleostomi</taxon>
        <taxon>Mammalia</taxon>
        <taxon>Eutheria</taxon>
        <taxon>Laurasiatheria</taxon>
        <taxon>Eulipotyphla</taxon>
        <taxon>Erinaceidae</taxon>
        <taxon>Erinaceinae</taxon>
        <taxon>Atelerix</taxon>
    </lineage>
</organism>
<feature type="chain" id="PRO_0000274179" description="Caveolin-2">
    <location>
        <begin position="1"/>
        <end position="162"/>
    </location>
</feature>
<feature type="topological domain" description="Cytoplasmic" evidence="4">
    <location>
        <begin position="1"/>
        <end position="86"/>
    </location>
</feature>
<feature type="intramembrane region" description="Helical" evidence="4">
    <location>
        <begin position="87"/>
        <end position="107"/>
    </location>
</feature>
<feature type="topological domain" description="Cytoplasmic" evidence="4">
    <location>
        <begin position="108"/>
        <end position="162"/>
    </location>
</feature>
<feature type="modified residue" description="Phosphotyrosine; by SRC" evidence="2">
    <location>
        <position position="19"/>
    </location>
</feature>
<feature type="modified residue" description="Phosphoserine" evidence="3">
    <location>
        <position position="20"/>
    </location>
</feature>
<feature type="modified residue" description="Phosphoserine" evidence="2">
    <location>
        <position position="23"/>
    </location>
</feature>
<feature type="modified residue" description="Phosphotyrosine; by SRC" evidence="2">
    <location>
        <position position="27"/>
    </location>
</feature>
<feature type="modified residue" description="Phosphoserine" evidence="2">
    <location>
        <position position="36"/>
    </location>
</feature>
<dbReference type="EMBL" id="DP000003">
    <property type="protein sequence ID" value="AAY88977.1"/>
    <property type="molecule type" value="Genomic_DNA"/>
</dbReference>
<dbReference type="SMR" id="Q00PK0"/>
<dbReference type="GO" id="GO:0005901">
    <property type="term" value="C:caveola"/>
    <property type="evidence" value="ECO:0000250"/>
    <property type="project" value="UniProtKB"/>
</dbReference>
<dbReference type="GO" id="GO:0031410">
    <property type="term" value="C:cytoplasmic vesicle"/>
    <property type="evidence" value="ECO:0007669"/>
    <property type="project" value="TreeGrafter"/>
</dbReference>
<dbReference type="GO" id="GO:0005925">
    <property type="term" value="C:focal adhesion"/>
    <property type="evidence" value="ECO:0007669"/>
    <property type="project" value="TreeGrafter"/>
</dbReference>
<dbReference type="GO" id="GO:0000139">
    <property type="term" value="C:Golgi membrane"/>
    <property type="evidence" value="ECO:0007669"/>
    <property type="project" value="UniProtKB-SubCell"/>
</dbReference>
<dbReference type="GO" id="GO:0005634">
    <property type="term" value="C:nucleus"/>
    <property type="evidence" value="ECO:0007669"/>
    <property type="project" value="UniProtKB-SubCell"/>
</dbReference>
<dbReference type="GO" id="GO:0048471">
    <property type="term" value="C:perinuclear region of cytoplasm"/>
    <property type="evidence" value="ECO:0000250"/>
    <property type="project" value="UniProtKB"/>
</dbReference>
<dbReference type="GO" id="GO:0044853">
    <property type="term" value="C:plasma membrane raft"/>
    <property type="evidence" value="ECO:0000250"/>
    <property type="project" value="UniProtKB"/>
</dbReference>
<dbReference type="GO" id="GO:0042383">
    <property type="term" value="C:sarcolemma"/>
    <property type="evidence" value="ECO:0007669"/>
    <property type="project" value="TreeGrafter"/>
</dbReference>
<dbReference type="GO" id="GO:0031748">
    <property type="term" value="F:D1 dopamine receptor binding"/>
    <property type="evidence" value="ECO:0000250"/>
    <property type="project" value="UniProtKB"/>
</dbReference>
<dbReference type="GO" id="GO:0060090">
    <property type="term" value="F:molecular adaptor activity"/>
    <property type="evidence" value="ECO:0007669"/>
    <property type="project" value="TreeGrafter"/>
</dbReference>
<dbReference type="GO" id="GO:0019901">
    <property type="term" value="F:protein kinase binding"/>
    <property type="evidence" value="ECO:0007669"/>
    <property type="project" value="TreeGrafter"/>
</dbReference>
<dbReference type="GO" id="GO:0070836">
    <property type="term" value="P:caveola assembly"/>
    <property type="evidence" value="ECO:0000250"/>
    <property type="project" value="UniProtKB"/>
</dbReference>
<dbReference type="GO" id="GO:0007029">
    <property type="term" value="P:endoplasmic reticulum organization"/>
    <property type="evidence" value="ECO:0000250"/>
    <property type="project" value="UniProtKB"/>
</dbReference>
<dbReference type="GO" id="GO:0008286">
    <property type="term" value="P:insulin receptor signaling pathway"/>
    <property type="evidence" value="ECO:0007669"/>
    <property type="project" value="TreeGrafter"/>
</dbReference>
<dbReference type="GO" id="GO:0007005">
    <property type="term" value="P:mitochondrion organization"/>
    <property type="evidence" value="ECO:0000250"/>
    <property type="project" value="UniProtKB"/>
</dbReference>
<dbReference type="GO" id="GO:0001937">
    <property type="term" value="P:negative regulation of endothelial cell proliferation"/>
    <property type="evidence" value="ECO:0000250"/>
    <property type="project" value="UniProtKB"/>
</dbReference>
<dbReference type="GO" id="GO:0060161">
    <property type="term" value="P:positive regulation of dopamine receptor signaling pathway"/>
    <property type="evidence" value="ECO:0000250"/>
    <property type="project" value="UniProtKB"/>
</dbReference>
<dbReference type="GO" id="GO:0051480">
    <property type="term" value="P:regulation of cytosolic calcium ion concentration"/>
    <property type="evidence" value="ECO:0007669"/>
    <property type="project" value="TreeGrafter"/>
</dbReference>
<dbReference type="GO" id="GO:0048741">
    <property type="term" value="P:skeletal muscle fiber development"/>
    <property type="evidence" value="ECO:0000250"/>
    <property type="project" value="UniProtKB"/>
</dbReference>
<dbReference type="GO" id="GO:0048278">
    <property type="term" value="P:vesicle docking"/>
    <property type="evidence" value="ECO:0000250"/>
    <property type="project" value="UniProtKB"/>
</dbReference>
<dbReference type="GO" id="GO:0006906">
    <property type="term" value="P:vesicle fusion"/>
    <property type="evidence" value="ECO:0000250"/>
    <property type="project" value="UniProtKB"/>
</dbReference>
<dbReference type="InterPro" id="IPR001612">
    <property type="entry name" value="Caveolin"/>
</dbReference>
<dbReference type="InterPro" id="IPR018361">
    <property type="entry name" value="Caveolin_CS"/>
</dbReference>
<dbReference type="PANTHER" id="PTHR10844">
    <property type="entry name" value="CAVEOLIN"/>
    <property type="match status" value="1"/>
</dbReference>
<dbReference type="PANTHER" id="PTHR10844:SF3">
    <property type="entry name" value="CAVEOLIN-2"/>
    <property type="match status" value="1"/>
</dbReference>
<dbReference type="Pfam" id="PF01146">
    <property type="entry name" value="Caveolin"/>
    <property type="match status" value="1"/>
</dbReference>
<dbReference type="PROSITE" id="PS01210">
    <property type="entry name" value="CAVEOLIN"/>
    <property type="match status" value="1"/>
</dbReference>
<name>CAV2_ATEAB</name>
<proteinExistence type="inferred from homology"/>
<accession>Q00PK0</accession>